<evidence type="ECO:0000255" key="1">
    <source>
        <dbReference type="HAMAP-Rule" id="MF_01866"/>
    </source>
</evidence>
<accession>B0TRI4</accession>
<protein>
    <recommendedName>
        <fullName evidence="1">YcgL domain-containing protein Shal_1837</fullName>
    </recommendedName>
</protein>
<dbReference type="EMBL" id="CP000931">
    <property type="protein sequence ID" value="ABZ76402.1"/>
    <property type="molecule type" value="Genomic_DNA"/>
</dbReference>
<dbReference type="RefSeq" id="WP_012276934.1">
    <property type="nucleotide sequence ID" value="NC_010334.1"/>
</dbReference>
<dbReference type="SMR" id="B0TRI4"/>
<dbReference type="STRING" id="458817.Shal_1837"/>
<dbReference type="KEGG" id="shl:Shal_1837"/>
<dbReference type="eggNOG" id="COG3100">
    <property type="taxonomic scope" value="Bacteria"/>
</dbReference>
<dbReference type="HOGENOM" id="CLU_155118_1_0_6"/>
<dbReference type="OrthoDB" id="7062382at2"/>
<dbReference type="Proteomes" id="UP000001317">
    <property type="component" value="Chromosome"/>
</dbReference>
<dbReference type="Gene3D" id="3.10.510.20">
    <property type="entry name" value="YcgL domain"/>
    <property type="match status" value="1"/>
</dbReference>
<dbReference type="HAMAP" id="MF_01866">
    <property type="entry name" value="UPF0745"/>
    <property type="match status" value="1"/>
</dbReference>
<dbReference type="InterPro" id="IPR038068">
    <property type="entry name" value="YcgL-like_sf"/>
</dbReference>
<dbReference type="InterPro" id="IPR027354">
    <property type="entry name" value="YcgL_dom"/>
</dbReference>
<dbReference type="PANTHER" id="PTHR38109">
    <property type="entry name" value="PROTEIN YCGL"/>
    <property type="match status" value="1"/>
</dbReference>
<dbReference type="PANTHER" id="PTHR38109:SF1">
    <property type="entry name" value="PROTEIN YCGL"/>
    <property type="match status" value="1"/>
</dbReference>
<dbReference type="Pfam" id="PF05166">
    <property type="entry name" value="YcgL"/>
    <property type="match status" value="1"/>
</dbReference>
<dbReference type="SUPFAM" id="SSF160191">
    <property type="entry name" value="YcgL-like"/>
    <property type="match status" value="1"/>
</dbReference>
<dbReference type="PROSITE" id="PS51648">
    <property type="entry name" value="YCGL"/>
    <property type="match status" value="1"/>
</dbReference>
<organism>
    <name type="scientific">Shewanella halifaxensis (strain HAW-EB4)</name>
    <dbReference type="NCBI Taxonomy" id="458817"/>
    <lineage>
        <taxon>Bacteria</taxon>
        <taxon>Pseudomonadati</taxon>
        <taxon>Pseudomonadota</taxon>
        <taxon>Gammaproteobacteria</taxon>
        <taxon>Alteromonadales</taxon>
        <taxon>Shewanellaceae</taxon>
        <taxon>Shewanella</taxon>
    </lineage>
</organism>
<name>Y1837_SHEHH</name>
<feature type="chain" id="PRO_0000375370" description="YcgL domain-containing protein Shal_1837">
    <location>
        <begin position="1"/>
        <end position="93"/>
    </location>
</feature>
<feature type="domain" description="YcgL" evidence="1">
    <location>
        <begin position="1"/>
        <end position="85"/>
    </location>
</feature>
<proteinExistence type="inferred from homology"/>
<gene>
    <name type="ordered locus">Shal_1837</name>
</gene>
<sequence length="93" mass="10968">MICAVYKSRRKAESYLFVEKRNDFERVPEALMDMFGEPQLVMMLPIEKRDHLGFADIKKVRSELKEKGFYLQLPPPVVNLLEQHKKEIGFNPD</sequence>
<reference key="1">
    <citation type="submission" date="2008-01" db="EMBL/GenBank/DDBJ databases">
        <title>Complete sequence of Shewanella halifaxensis HAW-EB4.</title>
        <authorList>
            <consortium name="US DOE Joint Genome Institute"/>
            <person name="Copeland A."/>
            <person name="Lucas S."/>
            <person name="Lapidus A."/>
            <person name="Glavina del Rio T."/>
            <person name="Dalin E."/>
            <person name="Tice H."/>
            <person name="Bruce D."/>
            <person name="Goodwin L."/>
            <person name="Pitluck S."/>
            <person name="Sims D."/>
            <person name="Brettin T."/>
            <person name="Detter J.C."/>
            <person name="Han C."/>
            <person name="Kuske C.R."/>
            <person name="Schmutz J."/>
            <person name="Larimer F."/>
            <person name="Land M."/>
            <person name="Hauser L."/>
            <person name="Kyrpides N."/>
            <person name="Kim E."/>
            <person name="Zhao J.-S."/>
            <person name="Richardson P."/>
        </authorList>
    </citation>
    <scope>NUCLEOTIDE SEQUENCE [LARGE SCALE GENOMIC DNA]</scope>
    <source>
        <strain>HAW-EB4</strain>
    </source>
</reference>